<protein>
    <recommendedName>
        <fullName>Malignant brain tumor repeat protein 1</fullName>
    </recommendedName>
</protein>
<gene>
    <name type="primary">mbtr-1</name>
    <name type="ORF">Y48G1A.6</name>
</gene>
<feature type="chain" id="PRO_0000417370" description="Malignant brain tumor repeat protein 1">
    <location>
        <begin position="1"/>
        <end position="564"/>
    </location>
</feature>
<feature type="repeat" description="MBT 1">
    <location>
        <begin position="64"/>
        <end position="176"/>
    </location>
</feature>
<feature type="repeat" description="MBT 2">
    <location>
        <begin position="205"/>
        <end position="327"/>
    </location>
</feature>
<feature type="repeat" description="MBT 3">
    <location>
        <begin position="331"/>
        <end position="442"/>
    </location>
</feature>
<feature type="repeat" description="MBT 4">
    <location>
        <begin position="450"/>
        <end position="549"/>
    </location>
</feature>
<feature type="splice variant" id="VSP_043613" description="In isoform b." evidence="3">
    <original>EKSSSNFIQNGKRDHGGKL</original>
    <variation>NFSNKK</variation>
    <location>
        <begin position="2"/>
        <end position="20"/>
    </location>
</feature>
<accession>A0SQM0</accession>
<accession>A9D1A1</accession>
<proteinExistence type="evidence at protein level"/>
<dbReference type="EMBL" id="DQ904352">
    <property type="protein sequence ID" value="ABI78934.1"/>
    <property type="molecule type" value="mRNA"/>
</dbReference>
<dbReference type="EMBL" id="FO080938">
    <property type="protein sequence ID" value="CCD67944.1"/>
    <property type="molecule type" value="Genomic_DNA"/>
</dbReference>
<dbReference type="EMBL" id="FO080938">
    <property type="protein sequence ID" value="CCD67945.1"/>
    <property type="molecule type" value="Genomic_DNA"/>
</dbReference>
<dbReference type="RefSeq" id="NP_001122542.1">
    <molecule id="A0SQM0-1"/>
    <property type="nucleotide sequence ID" value="NM_001129070.2"/>
</dbReference>
<dbReference type="RefSeq" id="NP_001122543.1">
    <molecule id="A0SQM0-2"/>
    <property type="nucleotide sequence ID" value="NM_001129071.3"/>
</dbReference>
<dbReference type="SMR" id="A0SQM0"/>
<dbReference type="BioGRID" id="37126">
    <property type="interactions" value="1"/>
</dbReference>
<dbReference type="FunCoup" id="A0SQM0">
    <property type="interactions" value="1648"/>
</dbReference>
<dbReference type="IntAct" id="A0SQM0">
    <property type="interactions" value="1"/>
</dbReference>
<dbReference type="STRING" id="6239.Y48G1A.6a.1"/>
<dbReference type="PaxDb" id="6239-Y48G1A.6a"/>
<dbReference type="EnsemblMetazoa" id="Y48G1A.6a.1">
    <molecule id="A0SQM0-1"/>
    <property type="protein sequence ID" value="Y48G1A.6a.1"/>
    <property type="gene ID" value="WBGene00021661"/>
</dbReference>
<dbReference type="EnsemblMetazoa" id="Y48G1A.6b.1">
    <molecule id="A0SQM0-2"/>
    <property type="protein sequence ID" value="Y48G1A.6b.1"/>
    <property type="gene ID" value="WBGene00021661"/>
</dbReference>
<dbReference type="GeneID" id="171624"/>
<dbReference type="KEGG" id="cel:CELE_Y48G1A.6"/>
<dbReference type="UCSC" id="Y48G1A.6b">
    <property type="organism name" value="c. elegans"/>
</dbReference>
<dbReference type="AGR" id="WB:WBGene00021661"/>
<dbReference type="CTD" id="171624"/>
<dbReference type="WormBase" id="Y48G1A.6a">
    <molecule id="A0SQM0-1"/>
    <property type="protein sequence ID" value="CE41949"/>
    <property type="gene ID" value="WBGene00021661"/>
    <property type="gene designation" value="mbtr-1"/>
</dbReference>
<dbReference type="WormBase" id="Y48G1A.6b">
    <molecule id="A0SQM0-2"/>
    <property type="protein sequence ID" value="CE41950"/>
    <property type="gene ID" value="WBGene00021661"/>
    <property type="gene designation" value="mbtr-1"/>
</dbReference>
<dbReference type="eggNOG" id="KOG3766">
    <property type="taxonomic scope" value="Eukaryota"/>
</dbReference>
<dbReference type="GeneTree" id="ENSGT00940000169237"/>
<dbReference type="InParanoid" id="A0SQM0"/>
<dbReference type="OrthoDB" id="8188861at2759"/>
<dbReference type="PhylomeDB" id="A0SQM0"/>
<dbReference type="PRO" id="PR:A0SQM0"/>
<dbReference type="Proteomes" id="UP000001940">
    <property type="component" value="Chromosome I"/>
</dbReference>
<dbReference type="Bgee" id="WBGene00021661">
    <property type="expression patterns" value="Expressed in adult organism and 3 other cell types or tissues"/>
</dbReference>
<dbReference type="GO" id="GO:0005634">
    <property type="term" value="C:nucleus"/>
    <property type="evidence" value="ECO:0000318"/>
    <property type="project" value="GO_Central"/>
</dbReference>
<dbReference type="GO" id="GO:0003682">
    <property type="term" value="F:chromatin binding"/>
    <property type="evidence" value="ECO:0000318"/>
    <property type="project" value="GO_Central"/>
</dbReference>
<dbReference type="GO" id="GO:0042393">
    <property type="term" value="F:histone binding"/>
    <property type="evidence" value="ECO:0000318"/>
    <property type="project" value="GO_Central"/>
</dbReference>
<dbReference type="GO" id="GO:0045892">
    <property type="term" value="P:negative regulation of DNA-templated transcription"/>
    <property type="evidence" value="ECO:0000318"/>
    <property type="project" value="GO_Central"/>
</dbReference>
<dbReference type="CDD" id="cd20088">
    <property type="entry name" value="MBT"/>
    <property type="match status" value="1"/>
</dbReference>
<dbReference type="CDD" id="cd20099">
    <property type="entry name" value="MBT_dSfmbt-like_rpt3"/>
    <property type="match status" value="1"/>
</dbReference>
<dbReference type="Gene3D" id="2.30.30.140">
    <property type="match status" value="4"/>
</dbReference>
<dbReference type="InterPro" id="IPR004092">
    <property type="entry name" value="Mbt"/>
</dbReference>
<dbReference type="InterPro" id="IPR050548">
    <property type="entry name" value="PcG_chromatin_remod_factors"/>
</dbReference>
<dbReference type="PANTHER" id="PTHR12247:SF131">
    <property type="entry name" value="LD05287P"/>
    <property type="match status" value="1"/>
</dbReference>
<dbReference type="PANTHER" id="PTHR12247">
    <property type="entry name" value="POLYCOMB GROUP PROTEIN"/>
    <property type="match status" value="1"/>
</dbReference>
<dbReference type="Pfam" id="PF02820">
    <property type="entry name" value="MBT"/>
    <property type="match status" value="3"/>
</dbReference>
<dbReference type="SMART" id="SM00561">
    <property type="entry name" value="MBT"/>
    <property type="match status" value="4"/>
</dbReference>
<dbReference type="SUPFAM" id="SSF63748">
    <property type="entry name" value="Tudor/PWWP/MBT"/>
    <property type="match status" value="4"/>
</dbReference>
<dbReference type="PROSITE" id="PS51079">
    <property type="entry name" value="MBT"/>
    <property type="match status" value="4"/>
</dbReference>
<comment type="subunit">
    <text evidence="2">Interacts with histone H3 that is trimethylated at 'Lys-9' (H3K9me3).</text>
</comment>
<comment type="alternative products">
    <event type="alternative splicing"/>
    <isoform>
        <id>A0SQM0-1</id>
        <name>a</name>
        <sequence type="displayed"/>
    </isoform>
    <isoform>
        <id>A0SQM0-2</id>
        <name>b</name>
        <sequence type="described" ref="VSP_043613"/>
    </isoform>
</comment>
<comment type="disruption phenotype">
    <text evidence="1">No visible phenotype.</text>
</comment>
<evidence type="ECO:0000269" key="1">
    <source>
    </source>
</evidence>
<evidence type="ECO:0000269" key="2">
    <source>
    </source>
</evidence>
<evidence type="ECO:0000305" key="3"/>
<organism>
    <name type="scientific">Caenorhabditis elegans</name>
    <dbReference type="NCBI Taxonomy" id="6239"/>
    <lineage>
        <taxon>Eukaryota</taxon>
        <taxon>Metazoa</taxon>
        <taxon>Ecdysozoa</taxon>
        <taxon>Nematoda</taxon>
        <taxon>Chromadorea</taxon>
        <taxon>Rhabditida</taxon>
        <taxon>Rhabditina</taxon>
        <taxon>Rhabditomorpha</taxon>
        <taxon>Rhabditoidea</taxon>
        <taxon>Rhabditidae</taxon>
        <taxon>Peloderinae</taxon>
        <taxon>Caenorhabditis</taxon>
    </lineage>
</organism>
<keyword id="KW-0025">Alternative splicing</keyword>
<keyword id="KW-1185">Reference proteome</keyword>
<keyword id="KW-0677">Repeat</keyword>
<reference key="1">
    <citation type="journal article" date="2007" name="Genetics">
        <title>LIN-61, one of two Caenorhabditis elegans malignant-brain-tumor-repeat-containing proteins, acts with the DRM and NuRD-like protein complexes in vulval development but not in certain other biological processes.</title>
        <authorList>
            <person name="Harrison M.M."/>
            <person name="Lu X."/>
            <person name="Horvitz H.R."/>
        </authorList>
    </citation>
    <scope>NUCLEOTIDE SEQUENCE [MRNA] (ISOFORM A)</scope>
    <scope>DISRUPTION PHENOTYPE</scope>
    <source>
        <strain>Bristol N2</strain>
    </source>
</reference>
<reference key="2">
    <citation type="journal article" date="2011" name="PLoS Genet.">
        <title>H3K9me2/3 binding of the MBT domain protein LIN-61 is essential for Caenorhabditis elegans vulva development.</title>
        <authorList>
            <person name="Koester-Eiserfunke N."/>
            <person name="Fischle W."/>
        </authorList>
    </citation>
    <scope>NUCLEOTIDE SEQUENCE [MRNA] (ISOFORM A)</scope>
    <scope>INTERACTION WITH HISTONE H3</scope>
    <source>
        <strain>Bristol N2</strain>
    </source>
</reference>
<reference key="3">
    <citation type="journal article" date="1998" name="Science">
        <title>Genome sequence of the nematode C. elegans: a platform for investigating biology.</title>
        <authorList>
            <consortium name="The C. elegans sequencing consortium"/>
        </authorList>
    </citation>
    <scope>NUCLEOTIDE SEQUENCE [LARGE SCALE GENOMIC DNA]</scope>
    <scope>ALTERNATIVE SPLICING</scope>
    <source>
        <strain>Bristol N2</strain>
    </source>
</reference>
<name>MBTR1_CAEEL</name>
<sequence>MEKSSSNFIQNGKRDHGGKLRQYNYKLEEAEYRYFTEERLFYRRRNPVEKIAQRIPKPQIEGTFTWSDELRCNYDGNTQFLPVEALEGCLPLEKLNQHLKPGFRLEVVVRPSLDPSITTKSPEIRWFGEVTAVCGFYVAIKFVGELNRRPCWFHMLSEDIFDIGSGLKQDPAMKWLQYRPLSLLKPMQCPKFWRRGSTPAPPVPRPTEEILDEFQAELHENRISEPKIFDQLRHLAHRPSRFRLNQRVELLNYLEPTEIRVARILRILGRRLMVMVTAQDYPEDLPSVEAKDRQVQHENVEFWVDESSFFLFPVGFAMINGLRTKATEGYLEHSRRIAEGSGSYHKDDVTFEQLFAGKPDISAEKLNLLKVGQKFELLDPLSDLRQSFCVATIRKICKTPGFLIISPDETESDDESFPIHIDNHFMHPVGYAEKFGIKLDRLAGTEPGKFKWEGYLKEKQAEKIPDEMLRPLPSKERRHMFEFGRVLEAVGQNETYWISPASVEEVHGRTVLIEFQGWDSEFSELYDMDSHDLLPAGWCEFFNFKLRHPVLPVNDPNAENGEYD</sequence>